<organism>
    <name type="scientific">Cupriavidus pinatubonensis (strain JMP 134 / LMG 1197)</name>
    <name type="common">Cupriavidus necator (strain JMP 134)</name>
    <dbReference type="NCBI Taxonomy" id="264198"/>
    <lineage>
        <taxon>Bacteria</taxon>
        <taxon>Pseudomonadati</taxon>
        <taxon>Pseudomonadota</taxon>
        <taxon>Betaproteobacteria</taxon>
        <taxon>Burkholderiales</taxon>
        <taxon>Burkholderiaceae</taxon>
        <taxon>Cupriavidus</taxon>
    </lineage>
</organism>
<dbReference type="EMBL" id="CP000090">
    <property type="protein sequence ID" value="AAZ62534.1"/>
    <property type="molecule type" value="Genomic_DNA"/>
</dbReference>
<dbReference type="SMR" id="Q46WE9"/>
<dbReference type="STRING" id="264198.Reut_A3174"/>
<dbReference type="KEGG" id="reu:Reut_A3174"/>
<dbReference type="eggNOG" id="COG0091">
    <property type="taxonomic scope" value="Bacteria"/>
</dbReference>
<dbReference type="HOGENOM" id="CLU_083987_3_3_4"/>
<dbReference type="OrthoDB" id="9805969at2"/>
<dbReference type="GO" id="GO:0022625">
    <property type="term" value="C:cytosolic large ribosomal subunit"/>
    <property type="evidence" value="ECO:0007669"/>
    <property type="project" value="TreeGrafter"/>
</dbReference>
<dbReference type="GO" id="GO:0019843">
    <property type="term" value="F:rRNA binding"/>
    <property type="evidence" value="ECO:0007669"/>
    <property type="project" value="UniProtKB-UniRule"/>
</dbReference>
<dbReference type="GO" id="GO:0003735">
    <property type="term" value="F:structural constituent of ribosome"/>
    <property type="evidence" value="ECO:0007669"/>
    <property type="project" value="InterPro"/>
</dbReference>
<dbReference type="GO" id="GO:0006412">
    <property type="term" value="P:translation"/>
    <property type="evidence" value="ECO:0007669"/>
    <property type="project" value="UniProtKB-UniRule"/>
</dbReference>
<dbReference type="CDD" id="cd00336">
    <property type="entry name" value="Ribosomal_L22"/>
    <property type="match status" value="1"/>
</dbReference>
<dbReference type="FunFam" id="3.90.470.10:FF:000001">
    <property type="entry name" value="50S ribosomal protein L22"/>
    <property type="match status" value="1"/>
</dbReference>
<dbReference type="Gene3D" id="3.90.470.10">
    <property type="entry name" value="Ribosomal protein L22/L17"/>
    <property type="match status" value="1"/>
</dbReference>
<dbReference type="HAMAP" id="MF_01331_B">
    <property type="entry name" value="Ribosomal_uL22_B"/>
    <property type="match status" value="1"/>
</dbReference>
<dbReference type="InterPro" id="IPR001063">
    <property type="entry name" value="Ribosomal_uL22"/>
</dbReference>
<dbReference type="InterPro" id="IPR005727">
    <property type="entry name" value="Ribosomal_uL22_bac/chlpt-type"/>
</dbReference>
<dbReference type="InterPro" id="IPR047867">
    <property type="entry name" value="Ribosomal_uL22_bac/org-type"/>
</dbReference>
<dbReference type="InterPro" id="IPR018260">
    <property type="entry name" value="Ribosomal_uL22_CS"/>
</dbReference>
<dbReference type="InterPro" id="IPR036394">
    <property type="entry name" value="Ribosomal_uL22_sf"/>
</dbReference>
<dbReference type="NCBIfam" id="TIGR01044">
    <property type="entry name" value="rplV_bact"/>
    <property type="match status" value="1"/>
</dbReference>
<dbReference type="PANTHER" id="PTHR13501">
    <property type="entry name" value="CHLOROPLAST 50S RIBOSOMAL PROTEIN L22-RELATED"/>
    <property type="match status" value="1"/>
</dbReference>
<dbReference type="PANTHER" id="PTHR13501:SF8">
    <property type="entry name" value="LARGE RIBOSOMAL SUBUNIT PROTEIN UL22M"/>
    <property type="match status" value="1"/>
</dbReference>
<dbReference type="Pfam" id="PF00237">
    <property type="entry name" value="Ribosomal_L22"/>
    <property type="match status" value="1"/>
</dbReference>
<dbReference type="SUPFAM" id="SSF54843">
    <property type="entry name" value="Ribosomal protein L22"/>
    <property type="match status" value="1"/>
</dbReference>
<dbReference type="PROSITE" id="PS00464">
    <property type="entry name" value="RIBOSOMAL_L22"/>
    <property type="match status" value="1"/>
</dbReference>
<keyword id="KW-0687">Ribonucleoprotein</keyword>
<keyword id="KW-0689">Ribosomal protein</keyword>
<keyword id="KW-0694">RNA-binding</keyword>
<keyword id="KW-0699">rRNA-binding</keyword>
<accession>Q46WE9</accession>
<protein>
    <recommendedName>
        <fullName evidence="1">Large ribosomal subunit protein uL22</fullName>
    </recommendedName>
    <alternativeName>
        <fullName evidence="2">50S ribosomal protein L22</fullName>
    </alternativeName>
</protein>
<feature type="chain" id="PRO_0000243191" description="Large ribosomal subunit protein uL22">
    <location>
        <begin position="1"/>
        <end position="109"/>
    </location>
</feature>
<comment type="function">
    <text evidence="1">This protein binds specifically to 23S rRNA; its binding is stimulated by other ribosomal proteins, e.g. L4, L17, and L20. It is important during the early stages of 50S assembly. It makes multiple contacts with different domains of the 23S rRNA in the assembled 50S subunit and ribosome (By similarity).</text>
</comment>
<comment type="function">
    <text evidence="1">The globular domain of the protein is located near the polypeptide exit tunnel on the outside of the subunit, while an extended beta-hairpin is found that lines the wall of the exit tunnel in the center of the 70S ribosome.</text>
</comment>
<comment type="subunit">
    <text evidence="1">Part of the 50S ribosomal subunit.</text>
</comment>
<comment type="similarity">
    <text evidence="1">Belongs to the universal ribosomal protein uL22 family.</text>
</comment>
<name>RL22_CUPPJ</name>
<sequence>MEVKAIHRGARISAQKTRLVADQIRGLPIERALNVLTFSPKKAAGIVKKVVESAIANAEHNEGADIDELKVKSIFVDKATSLKRFTARAKGRGNRIEKQTCHITVTLGN</sequence>
<gene>
    <name evidence="1" type="primary">rplV</name>
    <name type="ordered locus">Reut_A3174</name>
</gene>
<evidence type="ECO:0000255" key="1">
    <source>
        <dbReference type="HAMAP-Rule" id="MF_01331"/>
    </source>
</evidence>
<evidence type="ECO:0000305" key="2"/>
<proteinExistence type="inferred from homology"/>
<reference key="1">
    <citation type="journal article" date="2010" name="PLoS ONE">
        <title>The complete multipartite genome sequence of Cupriavidus necator JMP134, a versatile pollutant degrader.</title>
        <authorList>
            <person name="Lykidis A."/>
            <person name="Perez-Pantoja D."/>
            <person name="Ledger T."/>
            <person name="Mavromatis K."/>
            <person name="Anderson I.J."/>
            <person name="Ivanova N.N."/>
            <person name="Hooper S.D."/>
            <person name="Lapidus A."/>
            <person name="Lucas S."/>
            <person name="Gonzalez B."/>
            <person name="Kyrpides N.C."/>
        </authorList>
    </citation>
    <scope>NUCLEOTIDE SEQUENCE [LARGE SCALE GENOMIC DNA]</scope>
    <source>
        <strain>JMP134 / LMG 1197</strain>
    </source>
</reference>